<reference key="1">
    <citation type="journal article" date="2003" name="Nat. Biotechnol.">
        <title>Complete genome sequence and comparative analysis of the industrial microorganism Streptomyces avermitilis.</title>
        <authorList>
            <person name="Ikeda H."/>
            <person name="Ishikawa J."/>
            <person name="Hanamoto A."/>
            <person name="Shinose M."/>
            <person name="Kikuchi H."/>
            <person name="Shiba T."/>
            <person name="Sakaki Y."/>
            <person name="Hattori M."/>
            <person name="Omura S."/>
        </authorList>
    </citation>
    <scope>NUCLEOTIDE SEQUENCE [LARGE SCALE GENOMIC DNA]</scope>
    <source>
        <strain>ATCC 31267 / DSM 46492 / JCM 5070 / NBRC 14893 / NCIMB 12804 / NRRL 8165 / MA-4680</strain>
    </source>
</reference>
<reference key="2">
    <citation type="journal article" date="2001" name="Proc. Natl. Acad. Sci. U.S.A.">
        <title>Genome sequence of an industrial microorganism Streptomyces avermitilis: deducing the ability of producing secondary metabolites.</title>
        <authorList>
            <person name="Omura S."/>
            <person name="Ikeda H."/>
            <person name="Ishikawa J."/>
            <person name="Hanamoto A."/>
            <person name="Takahashi C."/>
            <person name="Shinose M."/>
            <person name="Takahashi Y."/>
            <person name="Horikawa H."/>
            <person name="Nakazawa H."/>
            <person name="Osonoe T."/>
            <person name="Kikuchi H."/>
            <person name="Shiba T."/>
            <person name="Sakaki Y."/>
            <person name="Hattori M."/>
        </authorList>
    </citation>
    <scope>NUCLEOTIDE SEQUENCE [LARGE SCALE GENOMIC DNA]</scope>
    <source>
        <strain>ATCC 31267 / DSM 46492 / JCM 5070 / NBRC 14893 / NCIMB 12804 / NRRL 8165 / MA-4680</strain>
    </source>
</reference>
<sequence length="222" mass="23488">MNNSVTNTARLLWAGLRSLLVLTVVTGVLYPLAVTGVAQGLFSDQANGSEIKADGKVVGSSLIGQAYNLPLKKGQETPEPDLKWFQGRPANGLGTNSVNTQYSLILSGATNRSGDNADLIKWVKDAKAAVVKDNSTADHKVKPSDVPADAVTSSGSGLDPDISPEYADLQVHRIAEQNHLAVAPVQKLVDEHTDGRTLGFIGEPRVNVLELNIALKELVATS</sequence>
<protein>
    <recommendedName>
        <fullName evidence="1">Potassium-transporting ATPase KdpC subunit</fullName>
    </recommendedName>
    <alternativeName>
        <fullName evidence="1">ATP phosphohydrolase [potassium-transporting] C chain</fullName>
    </alternativeName>
    <alternativeName>
        <fullName evidence="1">Potassium-binding and translocating subunit C</fullName>
    </alternativeName>
    <alternativeName>
        <fullName evidence="1">Potassium-translocating ATPase C chain</fullName>
    </alternativeName>
</protein>
<keyword id="KW-0067">ATP-binding</keyword>
<keyword id="KW-1003">Cell membrane</keyword>
<keyword id="KW-0406">Ion transport</keyword>
<keyword id="KW-0472">Membrane</keyword>
<keyword id="KW-0547">Nucleotide-binding</keyword>
<keyword id="KW-0630">Potassium</keyword>
<keyword id="KW-0633">Potassium transport</keyword>
<keyword id="KW-1185">Reference proteome</keyword>
<keyword id="KW-0812">Transmembrane</keyword>
<keyword id="KW-1133">Transmembrane helix</keyword>
<keyword id="KW-0813">Transport</keyword>
<comment type="function">
    <text evidence="1">Part of the high-affinity ATP-driven potassium transport (or Kdp) system, which catalyzes the hydrolysis of ATP coupled with the electrogenic transport of potassium into the cytoplasm. This subunit acts as a catalytic chaperone that increases the ATP-binding affinity of the ATP-hydrolyzing subunit KdpB by the formation of a transient KdpB/KdpC/ATP ternary complex.</text>
</comment>
<comment type="subunit">
    <text evidence="1">The system is composed of three essential subunits: KdpA, KdpB and KdpC.</text>
</comment>
<comment type="subcellular location">
    <subcellularLocation>
        <location evidence="1">Cell membrane</location>
        <topology evidence="1">Single-pass membrane protein</topology>
    </subcellularLocation>
</comment>
<comment type="similarity">
    <text evidence="1">Belongs to the KdpC family.</text>
</comment>
<organism>
    <name type="scientific">Streptomyces avermitilis (strain ATCC 31267 / DSM 46492 / JCM 5070 / NBRC 14893 / NCIMB 12804 / NRRL 8165 / MA-4680)</name>
    <dbReference type="NCBI Taxonomy" id="227882"/>
    <lineage>
        <taxon>Bacteria</taxon>
        <taxon>Bacillati</taxon>
        <taxon>Actinomycetota</taxon>
        <taxon>Actinomycetes</taxon>
        <taxon>Kitasatosporales</taxon>
        <taxon>Streptomycetaceae</taxon>
        <taxon>Streptomyces</taxon>
    </lineage>
</organism>
<evidence type="ECO:0000255" key="1">
    <source>
        <dbReference type="HAMAP-Rule" id="MF_00276"/>
    </source>
</evidence>
<evidence type="ECO:0000256" key="2">
    <source>
        <dbReference type="SAM" id="MobiDB-lite"/>
    </source>
</evidence>
<dbReference type="EMBL" id="BA000030">
    <property type="protein sequence ID" value="BAC68627.1"/>
    <property type="molecule type" value="Genomic_DNA"/>
</dbReference>
<dbReference type="RefSeq" id="WP_010982355.1">
    <property type="nucleotide sequence ID" value="NZ_JZJK01000088.1"/>
</dbReference>
<dbReference type="SMR" id="Q82PI5"/>
<dbReference type="GeneID" id="41538029"/>
<dbReference type="KEGG" id="sma:SAVERM_917"/>
<dbReference type="eggNOG" id="COG2156">
    <property type="taxonomic scope" value="Bacteria"/>
</dbReference>
<dbReference type="HOGENOM" id="CLU_077094_1_0_11"/>
<dbReference type="OrthoDB" id="9788285at2"/>
<dbReference type="Proteomes" id="UP000000428">
    <property type="component" value="Chromosome"/>
</dbReference>
<dbReference type="GO" id="GO:0005886">
    <property type="term" value="C:plasma membrane"/>
    <property type="evidence" value="ECO:0007669"/>
    <property type="project" value="UniProtKB-SubCell"/>
</dbReference>
<dbReference type="GO" id="GO:0005524">
    <property type="term" value="F:ATP binding"/>
    <property type="evidence" value="ECO:0007669"/>
    <property type="project" value="UniProtKB-UniRule"/>
</dbReference>
<dbReference type="GO" id="GO:0008556">
    <property type="term" value="F:P-type potassium transmembrane transporter activity"/>
    <property type="evidence" value="ECO:0007669"/>
    <property type="project" value="InterPro"/>
</dbReference>
<dbReference type="HAMAP" id="MF_00276">
    <property type="entry name" value="KdpC"/>
    <property type="match status" value="1"/>
</dbReference>
<dbReference type="InterPro" id="IPR003820">
    <property type="entry name" value="KdpC"/>
</dbReference>
<dbReference type="NCBIfam" id="TIGR00681">
    <property type="entry name" value="kdpC"/>
    <property type="match status" value="1"/>
</dbReference>
<dbReference type="NCBIfam" id="NF010599">
    <property type="entry name" value="PRK13994.1"/>
    <property type="match status" value="1"/>
</dbReference>
<dbReference type="PANTHER" id="PTHR30042">
    <property type="entry name" value="POTASSIUM-TRANSPORTING ATPASE C CHAIN"/>
    <property type="match status" value="1"/>
</dbReference>
<dbReference type="PANTHER" id="PTHR30042:SF2">
    <property type="entry name" value="POTASSIUM-TRANSPORTING ATPASE KDPC SUBUNIT"/>
    <property type="match status" value="1"/>
</dbReference>
<dbReference type="Pfam" id="PF02669">
    <property type="entry name" value="KdpC"/>
    <property type="match status" value="1"/>
</dbReference>
<dbReference type="PIRSF" id="PIRSF001296">
    <property type="entry name" value="K_ATPase_KdpC"/>
    <property type="match status" value="1"/>
</dbReference>
<proteinExistence type="inferred from homology"/>
<gene>
    <name evidence="1" type="primary">kdpC</name>
    <name type="ordered locus">SAV_917</name>
</gene>
<accession>Q82PI5</accession>
<feature type="chain" id="PRO_1000022322" description="Potassium-transporting ATPase KdpC subunit">
    <location>
        <begin position="1"/>
        <end position="222"/>
    </location>
</feature>
<feature type="transmembrane region" description="Helical" evidence="1">
    <location>
        <begin position="13"/>
        <end position="35"/>
    </location>
</feature>
<feature type="region of interest" description="Disordered" evidence="2">
    <location>
        <begin position="136"/>
        <end position="162"/>
    </location>
</feature>
<name>KDPC_STRAW</name>